<organism>
    <name type="scientific">Sulfolobus acidocaldarius (strain ATCC 33909 / DSM 639 / JCM 8929 / NBRC 15157 / NCIMB 11770)</name>
    <dbReference type="NCBI Taxonomy" id="330779"/>
    <lineage>
        <taxon>Archaea</taxon>
        <taxon>Thermoproteota</taxon>
        <taxon>Thermoprotei</taxon>
        <taxon>Sulfolobales</taxon>
        <taxon>Sulfolobaceae</taxon>
        <taxon>Sulfolobus</taxon>
    </lineage>
</organism>
<accession>Q4JA60</accession>
<proteinExistence type="inferred from homology"/>
<evidence type="ECO:0000255" key="1">
    <source>
        <dbReference type="HAMAP-Rule" id="MF_00052"/>
    </source>
</evidence>
<evidence type="ECO:0000255" key="2">
    <source>
        <dbReference type="PROSITE-ProRule" id="PRU01319"/>
    </source>
</evidence>
<gene>
    <name evidence="1" type="primary">rnhB</name>
    <name type="ordered locus">Saci_0958</name>
</gene>
<reference key="1">
    <citation type="journal article" date="2005" name="J. Bacteriol.">
        <title>The genome of Sulfolobus acidocaldarius, a model organism of the Crenarchaeota.</title>
        <authorList>
            <person name="Chen L."/>
            <person name="Bruegger K."/>
            <person name="Skovgaard M."/>
            <person name="Redder P."/>
            <person name="She Q."/>
            <person name="Torarinsson E."/>
            <person name="Greve B."/>
            <person name="Awayez M."/>
            <person name="Zibat A."/>
            <person name="Klenk H.-P."/>
            <person name="Garrett R.A."/>
        </authorList>
    </citation>
    <scope>NUCLEOTIDE SEQUENCE [LARGE SCALE GENOMIC DNA]</scope>
    <source>
        <strain>ATCC 33909 / DSM 639 / JCM 8929 / NBRC 15157 / NCIMB 11770</strain>
    </source>
</reference>
<feature type="chain" id="PRO_0000236285" description="Ribonuclease HII">
    <location>
        <begin position="1"/>
        <end position="212"/>
    </location>
</feature>
<feature type="domain" description="RNase H type-2" evidence="2">
    <location>
        <begin position="1"/>
        <end position="206"/>
    </location>
</feature>
<feature type="binding site" evidence="1">
    <location>
        <position position="7"/>
    </location>
    <ligand>
        <name>a divalent metal cation</name>
        <dbReference type="ChEBI" id="CHEBI:60240"/>
    </ligand>
</feature>
<feature type="binding site" evidence="1">
    <location>
        <position position="8"/>
    </location>
    <ligand>
        <name>a divalent metal cation</name>
        <dbReference type="ChEBI" id="CHEBI:60240"/>
    </ligand>
</feature>
<feature type="binding site" evidence="1">
    <location>
        <position position="104"/>
    </location>
    <ligand>
        <name>a divalent metal cation</name>
        <dbReference type="ChEBI" id="CHEBI:60240"/>
    </ligand>
</feature>
<protein>
    <recommendedName>
        <fullName evidence="1">Ribonuclease HII</fullName>
        <shortName evidence="1">RNase HII</shortName>
        <ecNumber evidence="1">3.1.26.4</ecNumber>
    </recommendedName>
</protein>
<dbReference type="EC" id="3.1.26.4" evidence="1"/>
<dbReference type="EMBL" id="CP000077">
    <property type="protein sequence ID" value="AAY80320.1"/>
    <property type="molecule type" value="Genomic_DNA"/>
</dbReference>
<dbReference type="RefSeq" id="WP_011277822.1">
    <property type="nucleotide sequence ID" value="NC_007181.1"/>
</dbReference>
<dbReference type="SMR" id="Q4JA60"/>
<dbReference type="STRING" id="330779.Saci_0958"/>
<dbReference type="GeneID" id="14551469"/>
<dbReference type="GeneID" id="78441305"/>
<dbReference type="KEGG" id="sai:Saci_0958"/>
<dbReference type="PATRIC" id="fig|330779.12.peg.919"/>
<dbReference type="eggNOG" id="arCOG04121">
    <property type="taxonomic scope" value="Archaea"/>
</dbReference>
<dbReference type="HOGENOM" id="CLU_036532_0_4_2"/>
<dbReference type="Proteomes" id="UP000001018">
    <property type="component" value="Chromosome"/>
</dbReference>
<dbReference type="GO" id="GO:0005737">
    <property type="term" value="C:cytoplasm"/>
    <property type="evidence" value="ECO:0007669"/>
    <property type="project" value="UniProtKB-SubCell"/>
</dbReference>
<dbReference type="GO" id="GO:0032299">
    <property type="term" value="C:ribonuclease H2 complex"/>
    <property type="evidence" value="ECO:0007669"/>
    <property type="project" value="TreeGrafter"/>
</dbReference>
<dbReference type="GO" id="GO:0030145">
    <property type="term" value="F:manganese ion binding"/>
    <property type="evidence" value="ECO:0007669"/>
    <property type="project" value="UniProtKB-UniRule"/>
</dbReference>
<dbReference type="GO" id="GO:0003723">
    <property type="term" value="F:RNA binding"/>
    <property type="evidence" value="ECO:0007669"/>
    <property type="project" value="InterPro"/>
</dbReference>
<dbReference type="GO" id="GO:0004523">
    <property type="term" value="F:RNA-DNA hybrid ribonuclease activity"/>
    <property type="evidence" value="ECO:0007669"/>
    <property type="project" value="UniProtKB-UniRule"/>
</dbReference>
<dbReference type="GO" id="GO:0043137">
    <property type="term" value="P:DNA replication, removal of RNA primer"/>
    <property type="evidence" value="ECO:0007669"/>
    <property type="project" value="TreeGrafter"/>
</dbReference>
<dbReference type="GO" id="GO:0006298">
    <property type="term" value="P:mismatch repair"/>
    <property type="evidence" value="ECO:0007669"/>
    <property type="project" value="TreeGrafter"/>
</dbReference>
<dbReference type="CDD" id="cd07180">
    <property type="entry name" value="RNase_HII_archaea_like"/>
    <property type="match status" value="1"/>
</dbReference>
<dbReference type="Gene3D" id="3.30.420.10">
    <property type="entry name" value="Ribonuclease H-like superfamily/Ribonuclease H"/>
    <property type="match status" value="1"/>
</dbReference>
<dbReference type="Gene3D" id="1.10.10.460">
    <property type="entry name" value="Ribonuclease hii. Domain 2"/>
    <property type="match status" value="1"/>
</dbReference>
<dbReference type="HAMAP" id="MF_00052_A">
    <property type="entry name" value="RNase_HII_A"/>
    <property type="match status" value="1"/>
</dbReference>
<dbReference type="InterPro" id="IPR004649">
    <property type="entry name" value="RNase_H2_suA"/>
</dbReference>
<dbReference type="InterPro" id="IPR001352">
    <property type="entry name" value="RNase_HII/HIII"/>
</dbReference>
<dbReference type="InterPro" id="IPR024567">
    <property type="entry name" value="RNase_HII/HIII_dom"/>
</dbReference>
<dbReference type="InterPro" id="IPR020787">
    <property type="entry name" value="RNase_HII_arc"/>
</dbReference>
<dbReference type="InterPro" id="IPR023160">
    <property type="entry name" value="RNase_HII_hlx-loop-hlx_cap_dom"/>
</dbReference>
<dbReference type="InterPro" id="IPR012337">
    <property type="entry name" value="RNaseH-like_sf"/>
</dbReference>
<dbReference type="InterPro" id="IPR036397">
    <property type="entry name" value="RNaseH_sf"/>
</dbReference>
<dbReference type="NCBIfam" id="TIGR00729">
    <property type="entry name" value="ribonuclease HII"/>
    <property type="match status" value="1"/>
</dbReference>
<dbReference type="PANTHER" id="PTHR10954:SF23">
    <property type="entry name" value="RIBONUCLEASE"/>
    <property type="match status" value="1"/>
</dbReference>
<dbReference type="PANTHER" id="PTHR10954">
    <property type="entry name" value="RIBONUCLEASE H2 SUBUNIT A"/>
    <property type="match status" value="1"/>
</dbReference>
<dbReference type="Pfam" id="PF01351">
    <property type="entry name" value="RNase_HII"/>
    <property type="match status" value="1"/>
</dbReference>
<dbReference type="SUPFAM" id="SSF53098">
    <property type="entry name" value="Ribonuclease H-like"/>
    <property type="match status" value="1"/>
</dbReference>
<dbReference type="PROSITE" id="PS51975">
    <property type="entry name" value="RNASE_H_2"/>
    <property type="match status" value="1"/>
</dbReference>
<name>RNH2_SULAC</name>
<comment type="function">
    <text evidence="1">Endonuclease that specifically degrades the RNA of RNA-DNA hybrids.</text>
</comment>
<comment type="catalytic activity">
    <reaction evidence="1">
        <text>Endonucleolytic cleavage to 5'-phosphomonoester.</text>
        <dbReference type="EC" id="3.1.26.4"/>
    </reaction>
</comment>
<comment type="cofactor">
    <cofactor evidence="1">
        <name>Mn(2+)</name>
        <dbReference type="ChEBI" id="CHEBI:29035"/>
    </cofactor>
    <cofactor evidence="1">
        <name>Mg(2+)</name>
        <dbReference type="ChEBI" id="CHEBI:18420"/>
    </cofactor>
    <text evidence="1">Manganese or magnesium. Binds 1 divalent metal ion per monomer in the absence of substrate. May bind a second metal ion after substrate binding.</text>
</comment>
<comment type="subcellular location">
    <subcellularLocation>
        <location evidence="1">Cytoplasm</location>
    </subcellularLocation>
</comment>
<comment type="similarity">
    <text evidence="1">Belongs to the RNase HII family.</text>
</comment>
<keyword id="KW-0963">Cytoplasm</keyword>
<keyword id="KW-0255">Endonuclease</keyword>
<keyword id="KW-0378">Hydrolase</keyword>
<keyword id="KW-0464">Manganese</keyword>
<keyword id="KW-0479">Metal-binding</keyword>
<keyword id="KW-0540">Nuclease</keyword>
<keyword id="KW-1185">Reference proteome</keyword>
<sequence length="212" mass="23856">MILVGIDEAGRGSLIGPMVVAGVAIDSNFLKFLSEIGVKDSKKLTRKKREYLFGVILEYSYAISLVKAYPEEIDSENLNEITYRAMIQIIHSMSVYNPSIVTVDKVGNASAVEREIININSSPRVENNADVKYVEVSAASIIAKVVRDNIINELKKTYGDFGSGYPGDKKTVEWIKDLYSRQPTYALPIIRRSWKILQDIAPNYYIRKRDGN</sequence>